<feature type="chain" id="PRO_0000088474" description="Putative zinc metalloprotease TP_0600">
    <location>
        <begin position="1"/>
        <end position="450"/>
    </location>
</feature>
<feature type="transmembrane region" description="Helical" evidence="2">
    <location>
        <begin position="102"/>
        <end position="124"/>
    </location>
</feature>
<feature type="transmembrane region" description="Helical" evidence="2">
    <location>
        <begin position="384"/>
        <end position="406"/>
    </location>
</feature>
<feature type="transmembrane region" description="Helical" evidence="2">
    <location>
        <begin position="421"/>
        <end position="443"/>
    </location>
</feature>
<feature type="domain" description="PDZ">
    <location>
        <begin position="200"/>
        <end position="278"/>
    </location>
</feature>
<feature type="active site" evidence="3">
    <location>
        <position position="19"/>
    </location>
</feature>
<feature type="binding site" evidence="3">
    <location>
        <position position="18"/>
    </location>
    <ligand>
        <name>Zn(2+)</name>
        <dbReference type="ChEBI" id="CHEBI:29105"/>
        <note>catalytic</note>
    </ligand>
</feature>
<feature type="binding site" evidence="3">
    <location>
        <position position="22"/>
    </location>
    <ligand>
        <name>Zn(2+)</name>
        <dbReference type="ChEBI" id="CHEBI:29105"/>
        <note>catalytic</note>
    </ligand>
</feature>
<organism>
    <name type="scientific">Treponema pallidum (strain Nichols)</name>
    <dbReference type="NCBI Taxonomy" id="243276"/>
    <lineage>
        <taxon>Bacteria</taxon>
        <taxon>Pseudomonadati</taxon>
        <taxon>Spirochaetota</taxon>
        <taxon>Spirochaetia</taxon>
        <taxon>Spirochaetales</taxon>
        <taxon>Treponemataceae</taxon>
        <taxon>Treponema</taxon>
    </lineage>
</organism>
<name>Y600_TREPA</name>
<dbReference type="EC" id="3.4.24.-"/>
<dbReference type="EMBL" id="AE000520">
    <property type="protein sequence ID" value="AAC65573.1"/>
    <property type="molecule type" value="Genomic_DNA"/>
</dbReference>
<dbReference type="PIR" id="B71304">
    <property type="entry name" value="B71304"/>
</dbReference>
<dbReference type="SMR" id="O83609"/>
<dbReference type="IntAct" id="O83609">
    <property type="interactions" value="1"/>
</dbReference>
<dbReference type="STRING" id="243276.TP_0600"/>
<dbReference type="EnsemblBacteria" id="AAC65573">
    <property type="protein sequence ID" value="AAC65573"/>
    <property type="gene ID" value="TP_0600"/>
</dbReference>
<dbReference type="KEGG" id="tpa:TP_0600"/>
<dbReference type="KEGG" id="tpw:TPANIC_0600"/>
<dbReference type="eggNOG" id="COG0750">
    <property type="taxonomic scope" value="Bacteria"/>
</dbReference>
<dbReference type="HOGENOM" id="CLU_025778_0_0_12"/>
<dbReference type="OrthoDB" id="9782003at2"/>
<dbReference type="Proteomes" id="UP000000811">
    <property type="component" value="Chromosome"/>
</dbReference>
<dbReference type="GO" id="GO:0005886">
    <property type="term" value="C:plasma membrane"/>
    <property type="evidence" value="ECO:0007669"/>
    <property type="project" value="UniProtKB-SubCell"/>
</dbReference>
<dbReference type="GO" id="GO:0046872">
    <property type="term" value="F:metal ion binding"/>
    <property type="evidence" value="ECO:0007669"/>
    <property type="project" value="UniProtKB-KW"/>
</dbReference>
<dbReference type="GO" id="GO:0004222">
    <property type="term" value="F:metalloendopeptidase activity"/>
    <property type="evidence" value="ECO:0007669"/>
    <property type="project" value="InterPro"/>
</dbReference>
<dbReference type="GO" id="GO:0006508">
    <property type="term" value="P:proteolysis"/>
    <property type="evidence" value="ECO:0007669"/>
    <property type="project" value="UniProtKB-KW"/>
</dbReference>
<dbReference type="CDD" id="cd23081">
    <property type="entry name" value="cpPDZ_EcRseP-like"/>
    <property type="match status" value="1"/>
</dbReference>
<dbReference type="CDD" id="cd06163">
    <property type="entry name" value="S2P-M50_PDZ_RseP-like"/>
    <property type="match status" value="1"/>
</dbReference>
<dbReference type="Gene3D" id="2.30.42.10">
    <property type="match status" value="2"/>
</dbReference>
<dbReference type="InterPro" id="IPR001478">
    <property type="entry name" value="PDZ"/>
</dbReference>
<dbReference type="InterPro" id="IPR041489">
    <property type="entry name" value="PDZ_6"/>
</dbReference>
<dbReference type="InterPro" id="IPR036034">
    <property type="entry name" value="PDZ_sf"/>
</dbReference>
<dbReference type="InterPro" id="IPR004387">
    <property type="entry name" value="Pept_M50_Zn"/>
</dbReference>
<dbReference type="InterPro" id="IPR008915">
    <property type="entry name" value="Peptidase_M50"/>
</dbReference>
<dbReference type="NCBIfam" id="TIGR00054">
    <property type="entry name" value="RIP metalloprotease RseP"/>
    <property type="match status" value="1"/>
</dbReference>
<dbReference type="PANTHER" id="PTHR42837:SF2">
    <property type="entry name" value="MEMBRANE METALLOPROTEASE ARASP2, CHLOROPLASTIC-RELATED"/>
    <property type="match status" value="1"/>
</dbReference>
<dbReference type="PANTHER" id="PTHR42837">
    <property type="entry name" value="REGULATOR OF SIGMA-E PROTEASE RSEP"/>
    <property type="match status" value="1"/>
</dbReference>
<dbReference type="Pfam" id="PF17820">
    <property type="entry name" value="PDZ_6"/>
    <property type="match status" value="2"/>
</dbReference>
<dbReference type="Pfam" id="PF02163">
    <property type="entry name" value="Peptidase_M50"/>
    <property type="match status" value="1"/>
</dbReference>
<dbReference type="SMART" id="SM00228">
    <property type="entry name" value="PDZ"/>
    <property type="match status" value="2"/>
</dbReference>
<dbReference type="SUPFAM" id="SSF50156">
    <property type="entry name" value="PDZ domain-like"/>
    <property type="match status" value="2"/>
</dbReference>
<dbReference type="PROSITE" id="PS00142">
    <property type="entry name" value="ZINC_PROTEASE"/>
    <property type="match status" value="1"/>
</dbReference>
<protein>
    <recommendedName>
        <fullName>Putative zinc metalloprotease TP_0600</fullName>
        <ecNumber>3.4.24.-</ecNumber>
    </recommendedName>
</protein>
<comment type="cofactor">
    <cofactor evidence="4">
        <name>Zn(2+)</name>
        <dbReference type="ChEBI" id="CHEBI:29105"/>
    </cofactor>
</comment>
<comment type="subcellular location">
    <subcellularLocation>
        <location evidence="1">Cell inner membrane</location>
        <topology evidence="1">Multi-pass membrane protein</topology>
    </subcellularLocation>
</comment>
<comment type="similarity">
    <text evidence="4">Belongs to the peptidase M50B family.</text>
</comment>
<evidence type="ECO:0000250" key="1"/>
<evidence type="ECO:0000255" key="2"/>
<evidence type="ECO:0000255" key="3">
    <source>
        <dbReference type="PROSITE-ProRule" id="PRU10095"/>
    </source>
</evidence>
<evidence type="ECO:0000305" key="4"/>
<proteinExistence type="inferred from homology"/>
<gene>
    <name type="ordered locus">TP_0600</name>
</gene>
<keyword id="KW-0997">Cell inner membrane</keyword>
<keyword id="KW-1003">Cell membrane</keyword>
<keyword id="KW-0378">Hydrolase</keyword>
<keyword id="KW-0472">Membrane</keyword>
<keyword id="KW-0479">Metal-binding</keyword>
<keyword id="KW-0482">Metalloprotease</keyword>
<keyword id="KW-0645">Protease</keyword>
<keyword id="KW-1185">Reference proteome</keyword>
<keyword id="KW-0812">Transmembrane</keyword>
<keyword id="KW-1133">Transmembrane helix</keyword>
<keyword id="KW-0862">Zinc</keyword>
<reference key="1">
    <citation type="journal article" date="1998" name="Science">
        <title>Complete genome sequence of Treponema pallidum, the syphilis spirochete.</title>
        <authorList>
            <person name="Fraser C.M."/>
            <person name="Norris S.J."/>
            <person name="Weinstock G.M."/>
            <person name="White O."/>
            <person name="Sutton G.G."/>
            <person name="Dodson R.J."/>
            <person name="Gwinn M.L."/>
            <person name="Hickey E.K."/>
            <person name="Clayton R.A."/>
            <person name="Ketchum K.A."/>
            <person name="Sodergren E."/>
            <person name="Hardham J.M."/>
            <person name="McLeod M.P."/>
            <person name="Salzberg S.L."/>
            <person name="Peterson J.D."/>
            <person name="Khalak H.G."/>
            <person name="Richardson D.L."/>
            <person name="Howell J.K."/>
            <person name="Chidambaram M."/>
            <person name="Utterback T.R."/>
            <person name="McDonald L.A."/>
            <person name="Artiach P."/>
            <person name="Bowman C."/>
            <person name="Cotton M.D."/>
            <person name="Fujii C."/>
            <person name="Garland S.A."/>
            <person name="Hatch B."/>
            <person name="Horst K."/>
            <person name="Roberts K.M."/>
            <person name="Sandusky M."/>
            <person name="Weidman J.F."/>
            <person name="Smith H.O."/>
            <person name="Venter J.C."/>
        </authorList>
    </citation>
    <scope>NUCLEOTIDE SEQUENCE [LARGE SCALE GENOMIC DNA]</scope>
    <source>
        <strain>Nichols</strain>
    </source>
</reference>
<accession>O83609</accession>
<sequence length="450" mass="49565">MIKIIIGVVVLGIVVLFHELGHFVAALWCRVEVLSFSVGMGPVLFRKKFGKTEYRLSMLPLGGYCGMKGEQAFQTALDQKLSRIPVEPGSLYAVGPLKRMGIAFAGPLANVLMAVMVLALVSALGSRVHTFGNRISPVYVYDSSDNSPARRVGLQDGDTILRIGDQPIRYFSDIQKIVSQHAQRALPFVIERRGQLMHVTITPDRDAHTGMGRVGIYHYVPLVVAAVDAHGAASRAGLEPEDKILAVAGRRVQHAVQLLALLKEFRKKSVVLTVLRSGKRRYHTIALVRTENGAIDVGIEWKAHTVVIPGTSFFASVRAGIAETLRMCVLTVKGIGMLFRGLQFQQAISGPLRITHVIGDVAQHGFQESFLTGLSQLCEFVALVCVSLFIMNLLPIPILDGGLILFACVELFMQRSIHPRVLYYLQFVGFAFVALIFLCAFWNDVNFLFH</sequence>